<proteinExistence type="inferred from homology"/>
<organism>
    <name type="scientific">Leptosphaeria maculans (strain JN3 / isolate v23.1.3 / race Av1-4-5-6-7-8)</name>
    <name type="common">Blackleg fungus</name>
    <name type="synonym">Phoma lingam</name>
    <dbReference type="NCBI Taxonomy" id="985895"/>
    <lineage>
        <taxon>Eukaryota</taxon>
        <taxon>Fungi</taxon>
        <taxon>Dikarya</taxon>
        <taxon>Ascomycota</taxon>
        <taxon>Pezizomycotina</taxon>
        <taxon>Dothideomycetes</taxon>
        <taxon>Pleosporomycetidae</taxon>
        <taxon>Pleosporales</taxon>
        <taxon>Pleosporineae</taxon>
        <taxon>Leptosphaeriaceae</taxon>
        <taxon>Plenodomus</taxon>
        <taxon>Plenodomus lingam/Leptosphaeria maculans species complex</taxon>
    </lineage>
</organism>
<gene>
    <name type="primary">LCL3</name>
    <name type="ORF">Lema_P027230.1</name>
</gene>
<protein>
    <recommendedName>
        <fullName>Probable endonuclease LCL3</fullName>
        <ecNumber>3.1.-.-</ecNumber>
    </recommendedName>
</protein>
<keyword id="KW-0106">Calcium</keyword>
<keyword id="KW-0255">Endonuclease</keyword>
<keyword id="KW-0378">Hydrolase</keyword>
<keyword id="KW-0472">Membrane</keyword>
<keyword id="KW-0479">Metal-binding</keyword>
<keyword id="KW-0496">Mitochondrion</keyword>
<keyword id="KW-0540">Nuclease</keyword>
<keyword id="KW-1185">Reference proteome</keyword>
<keyword id="KW-0812">Transmembrane</keyword>
<keyword id="KW-1133">Transmembrane helix</keyword>
<reference key="1">
    <citation type="journal article" date="2011" name="Nat. Commun.">
        <title>Effector diversification within compartments of the Leptosphaeria maculans genome affected by Repeat-Induced Point mutations.</title>
        <authorList>
            <person name="Rouxel T."/>
            <person name="Grandaubert J."/>
            <person name="Hane J.K."/>
            <person name="Hoede C."/>
            <person name="van de Wouw A.P."/>
            <person name="Couloux A."/>
            <person name="Dominguez V."/>
            <person name="Anthouard V."/>
            <person name="Bally P."/>
            <person name="Bourras S."/>
            <person name="Cozijnsen A.J."/>
            <person name="Ciuffetti L.M."/>
            <person name="Degrave A."/>
            <person name="Dilmaghani A."/>
            <person name="Duret L."/>
            <person name="Fudal I."/>
            <person name="Goodwin S.B."/>
            <person name="Gout L."/>
            <person name="Glaser N."/>
            <person name="Linglin J."/>
            <person name="Kema G.H.J."/>
            <person name="Lapalu N."/>
            <person name="Lawrence C.B."/>
            <person name="May K."/>
            <person name="Meyer M."/>
            <person name="Ollivier B."/>
            <person name="Poulain J."/>
            <person name="Schoch C.L."/>
            <person name="Simon A."/>
            <person name="Spatafora J.W."/>
            <person name="Stachowiak A."/>
            <person name="Turgeon B.G."/>
            <person name="Tyler B.M."/>
            <person name="Vincent D."/>
            <person name="Weissenbach J."/>
            <person name="Amselem J."/>
            <person name="Quesneville H."/>
            <person name="Oliver R.P."/>
            <person name="Wincker P."/>
            <person name="Balesdent M.-H."/>
            <person name="Howlett B.J."/>
        </authorList>
    </citation>
    <scope>NUCLEOTIDE SEQUENCE [LARGE SCALE GENOMIC DNA]</scope>
    <source>
        <strain>JN3 / isolate v23.1.3 / race Av1-4-5-6-7-8</strain>
    </source>
</reference>
<evidence type="ECO:0000250" key="1"/>
<evidence type="ECO:0000255" key="2"/>
<evidence type="ECO:0000255" key="3">
    <source>
        <dbReference type="PROSITE-ProRule" id="PRU00272"/>
    </source>
</evidence>
<evidence type="ECO:0000256" key="4">
    <source>
        <dbReference type="SAM" id="MobiDB-lite"/>
    </source>
</evidence>
<evidence type="ECO:0000305" key="5"/>
<dbReference type="EC" id="3.1.-.-"/>
<dbReference type="EMBL" id="FP929127">
    <property type="protein sequence ID" value="CBX95571.1"/>
    <property type="molecule type" value="Genomic_DNA"/>
</dbReference>
<dbReference type="RefSeq" id="XP_003839050.1">
    <property type="nucleotide sequence ID" value="XM_003839002.1"/>
</dbReference>
<dbReference type="FunCoup" id="E4ZVE5">
    <property type="interactions" value="13"/>
</dbReference>
<dbReference type="STRING" id="985895.E4ZVE5"/>
<dbReference type="EnsemblFungi" id="CBX95571">
    <property type="protein sequence ID" value="CBX95571"/>
    <property type="gene ID" value="LEMA_P027230.1"/>
</dbReference>
<dbReference type="GeneID" id="13281101"/>
<dbReference type="VEuPathDB" id="FungiDB:LEMA_P027230.1"/>
<dbReference type="eggNOG" id="ENOG502RZZQ">
    <property type="taxonomic scope" value="Eukaryota"/>
</dbReference>
<dbReference type="HOGENOM" id="CLU_046484_0_1_1"/>
<dbReference type="InParanoid" id="E4ZVE5"/>
<dbReference type="OMA" id="IYHTPGG"/>
<dbReference type="OrthoDB" id="430293at2759"/>
<dbReference type="Proteomes" id="UP000002668">
    <property type="component" value="Genome"/>
</dbReference>
<dbReference type="GO" id="GO:0016020">
    <property type="term" value="C:membrane"/>
    <property type="evidence" value="ECO:0007669"/>
    <property type="project" value="UniProtKB-SubCell"/>
</dbReference>
<dbReference type="GO" id="GO:0005739">
    <property type="term" value="C:mitochondrion"/>
    <property type="evidence" value="ECO:0007669"/>
    <property type="project" value="UniProtKB-SubCell"/>
</dbReference>
<dbReference type="GO" id="GO:0004519">
    <property type="term" value="F:endonuclease activity"/>
    <property type="evidence" value="ECO:0007669"/>
    <property type="project" value="UniProtKB-KW"/>
</dbReference>
<dbReference type="GO" id="GO:0046872">
    <property type="term" value="F:metal ion binding"/>
    <property type="evidence" value="ECO:0007669"/>
    <property type="project" value="UniProtKB-KW"/>
</dbReference>
<dbReference type="Gene3D" id="2.40.50.90">
    <property type="match status" value="1"/>
</dbReference>
<dbReference type="InterPro" id="IPR035437">
    <property type="entry name" value="SNase_OB-fold_sf"/>
</dbReference>
<dbReference type="InterPro" id="IPR016071">
    <property type="entry name" value="Staphylococal_nuclease_OB-fold"/>
</dbReference>
<dbReference type="PANTHER" id="PTHR12302">
    <property type="entry name" value="EBNA2 BINDING PROTEIN P100"/>
    <property type="match status" value="1"/>
</dbReference>
<dbReference type="PANTHER" id="PTHR12302:SF3">
    <property type="entry name" value="SERINE_THREONINE-PROTEIN KINASE 31"/>
    <property type="match status" value="1"/>
</dbReference>
<dbReference type="Pfam" id="PF00565">
    <property type="entry name" value="SNase"/>
    <property type="match status" value="1"/>
</dbReference>
<dbReference type="SMART" id="SM00318">
    <property type="entry name" value="SNc"/>
    <property type="match status" value="1"/>
</dbReference>
<dbReference type="SUPFAM" id="SSF50199">
    <property type="entry name" value="Staphylococcal nuclease"/>
    <property type="match status" value="1"/>
</dbReference>
<dbReference type="PROSITE" id="PS50830">
    <property type="entry name" value="TNASE_3"/>
    <property type="match status" value="1"/>
</dbReference>
<sequence>MRWPWSGHDEEKKRNAATRSKRAETANSWTGTLLESRTLVPSVALTVSTVLGLRLYKAYFRRIPTVNHIKPDYFRRRTLFGQVTSVGDADNFRLYHTPGGRLAGWGWLPWKTVPTKREALVKQTVGPVLILWRLRPRRISSDWMLKAIQLHIRIAGVDAPELAHWGREAQPYSKEALDWLTQLILHQRVRVRLYRRDQYDRVVAQVYYRRWFFRQDVGLEMLKMGLATVYEAKSGAEFGDVEQQYRAAEEKAKESRAGMWAKPNLLQRLGGAGTKAPESPREYKSRHTAAEKQKKAAW</sequence>
<name>LCL3_LEPMJ</name>
<comment type="subcellular location">
    <subcellularLocation>
        <location>Mitochondrion</location>
    </subcellularLocation>
    <subcellularLocation>
        <location evidence="1">Membrane</location>
        <topology evidence="1">Single-pass membrane protein</topology>
    </subcellularLocation>
</comment>
<comment type="similarity">
    <text evidence="5">Belongs to the LCL3 family.</text>
</comment>
<feature type="chain" id="PRO_0000408665" description="Probable endonuclease LCL3">
    <location>
        <begin position="1"/>
        <end position="298"/>
    </location>
</feature>
<feature type="transmembrane region" description="Helical" evidence="2">
    <location>
        <begin position="39"/>
        <end position="56"/>
    </location>
</feature>
<feature type="domain" description="TNase-like" evidence="3">
    <location>
        <begin position="77"/>
        <end position="262"/>
    </location>
</feature>
<feature type="region of interest" description="Disordered" evidence="4">
    <location>
        <begin position="1"/>
        <end position="24"/>
    </location>
</feature>
<feature type="region of interest" description="Disordered" evidence="4">
    <location>
        <begin position="269"/>
        <end position="298"/>
    </location>
</feature>
<feature type="compositionally biased region" description="Basic and acidic residues" evidence="4">
    <location>
        <begin position="278"/>
        <end position="298"/>
    </location>
</feature>
<feature type="active site" evidence="3">
    <location>
        <position position="153"/>
    </location>
</feature>
<feature type="active site" evidence="3">
    <location>
        <position position="161"/>
    </location>
</feature>
<feature type="active site" evidence="3">
    <location>
        <position position="201"/>
    </location>
</feature>
<feature type="binding site" evidence="3">
    <location>
        <position position="158"/>
    </location>
    <ligand>
        <name>Ca(2+)</name>
        <dbReference type="ChEBI" id="CHEBI:29108"/>
    </ligand>
</feature>
<accession>E4ZVE5</accession>